<gene>
    <name evidence="1" type="primary">rlmC</name>
    <name type="synonym">rumB</name>
    <name type="ordered locus">VV2_1394</name>
</gene>
<proteinExistence type="inferred from homology"/>
<comment type="function">
    <text evidence="1">Catalyzes the formation of 5-methyl-uridine at position 747 (m5U747) in 23S rRNA.</text>
</comment>
<comment type="catalytic activity">
    <reaction evidence="1">
        <text>uridine(747) in 23S rRNA + S-adenosyl-L-methionine = 5-methyluridine(747) in 23S rRNA + S-adenosyl-L-homocysteine + H(+)</text>
        <dbReference type="Rhea" id="RHEA:42628"/>
        <dbReference type="Rhea" id="RHEA-COMP:10154"/>
        <dbReference type="Rhea" id="RHEA-COMP:10155"/>
        <dbReference type="ChEBI" id="CHEBI:15378"/>
        <dbReference type="ChEBI" id="CHEBI:57856"/>
        <dbReference type="ChEBI" id="CHEBI:59789"/>
        <dbReference type="ChEBI" id="CHEBI:65315"/>
        <dbReference type="ChEBI" id="CHEBI:74447"/>
        <dbReference type="EC" id="2.1.1.189"/>
    </reaction>
</comment>
<comment type="similarity">
    <text evidence="1">Belongs to the class I-like SAM-binding methyltransferase superfamily. RNA M5U methyltransferase family. RlmC subfamily.</text>
</comment>
<accession>Q8D4B4</accession>
<feature type="chain" id="PRO_0000161939" description="23S rRNA (uracil(747)-C(5))-methyltransferase RlmC">
    <location>
        <begin position="1"/>
        <end position="376"/>
    </location>
</feature>
<feature type="active site" description="Nucleophile" evidence="1">
    <location>
        <position position="335"/>
    </location>
</feature>
<feature type="binding site" evidence="1">
    <location>
        <position position="3"/>
    </location>
    <ligand>
        <name>[4Fe-4S] cluster</name>
        <dbReference type="ChEBI" id="CHEBI:49883"/>
    </ligand>
</feature>
<feature type="binding site" evidence="1">
    <location>
        <position position="11"/>
    </location>
    <ligand>
        <name>[4Fe-4S] cluster</name>
        <dbReference type="ChEBI" id="CHEBI:49883"/>
    </ligand>
</feature>
<feature type="binding site" evidence="1">
    <location>
        <position position="14"/>
    </location>
    <ligand>
        <name>[4Fe-4S] cluster</name>
        <dbReference type="ChEBI" id="CHEBI:49883"/>
    </ligand>
</feature>
<feature type="binding site" evidence="1">
    <location>
        <position position="88"/>
    </location>
    <ligand>
        <name>[4Fe-4S] cluster</name>
        <dbReference type="ChEBI" id="CHEBI:49883"/>
    </ligand>
</feature>
<feature type="binding site" evidence="1">
    <location>
        <position position="213"/>
    </location>
    <ligand>
        <name>S-adenosyl-L-methionine</name>
        <dbReference type="ChEBI" id="CHEBI:59789"/>
    </ligand>
</feature>
<feature type="binding site" evidence="1">
    <location>
        <position position="242"/>
    </location>
    <ligand>
        <name>S-adenosyl-L-methionine</name>
        <dbReference type="ChEBI" id="CHEBI:59789"/>
    </ligand>
</feature>
<feature type="binding site" evidence="1">
    <location>
        <position position="263"/>
    </location>
    <ligand>
        <name>S-adenosyl-L-methionine</name>
        <dbReference type="ChEBI" id="CHEBI:59789"/>
    </ligand>
</feature>
<feature type="binding site" evidence="1">
    <location>
        <position position="308"/>
    </location>
    <ligand>
        <name>S-adenosyl-L-methionine</name>
        <dbReference type="ChEBI" id="CHEBI:59789"/>
    </ligand>
</feature>
<sequence>MSCPYFEQKSCTSCTHMNTPYSQQLETKDNALRSLFSDVEQSAWLAPVQSDSMHCRNKAKMVALGAAHQPTLGIESVQDGTPISLVHCPLYTQESQELLAYLQEWIRTSGIPPYNKVKKKGELKFVLLTRSQARGEFMLRFVVRSEAALERIRHNLPRLQQAFPAVRVISANIQPIHMARLEGEQEIFLTDAHYLLEEFNGVPMVVRPKSFFQTNPHVAAQLYATARNWVAELKPRQMWDLFCGVGGFALHCAPHAEQVIGIEIEEEAINSAKLSAQQLGIDNLRFSALDSAAYSQAQTQAADLILVNPPRRGLGQALSEQLEQLASQYLIYSSCNPVTMQQDLAHLPSYRVERAQWFDMFPHTDHAEVMMLLVRQ</sequence>
<protein>
    <recommendedName>
        <fullName evidence="1">23S rRNA (uracil(747)-C(5))-methyltransferase RlmC</fullName>
        <ecNumber evidence="1">2.1.1.189</ecNumber>
    </recommendedName>
    <alternativeName>
        <fullName evidence="1">23S rRNA(m5U747)-methyltransferase</fullName>
    </alternativeName>
</protein>
<organism>
    <name type="scientific">Vibrio vulnificus (strain CMCP6)</name>
    <dbReference type="NCBI Taxonomy" id="216895"/>
    <lineage>
        <taxon>Bacteria</taxon>
        <taxon>Pseudomonadati</taxon>
        <taxon>Pseudomonadota</taxon>
        <taxon>Gammaproteobacteria</taxon>
        <taxon>Vibrionales</taxon>
        <taxon>Vibrionaceae</taxon>
        <taxon>Vibrio</taxon>
    </lineage>
</organism>
<evidence type="ECO:0000255" key="1">
    <source>
        <dbReference type="HAMAP-Rule" id="MF_01012"/>
    </source>
</evidence>
<reference key="1">
    <citation type="submission" date="2002-12" db="EMBL/GenBank/DDBJ databases">
        <title>Complete genome sequence of Vibrio vulnificus CMCP6.</title>
        <authorList>
            <person name="Rhee J.H."/>
            <person name="Kim S.Y."/>
            <person name="Chung S.S."/>
            <person name="Kim J.J."/>
            <person name="Moon Y.H."/>
            <person name="Jeong H."/>
            <person name="Choy H.E."/>
        </authorList>
    </citation>
    <scope>NUCLEOTIDE SEQUENCE [LARGE SCALE GENOMIC DNA]</scope>
    <source>
        <strain>CMCP6</strain>
    </source>
</reference>
<dbReference type="EC" id="2.1.1.189" evidence="1"/>
<dbReference type="EMBL" id="AE016796">
    <property type="protein sequence ID" value="AAO08275.2"/>
    <property type="molecule type" value="Genomic_DNA"/>
</dbReference>
<dbReference type="RefSeq" id="WP_011082271.1">
    <property type="nucleotide sequence ID" value="NC_004460.2"/>
</dbReference>
<dbReference type="SMR" id="Q8D4B4"/>
<dbReference type="KEGG" id="vvu:VV2_1394"/>
<dbReference type="HOGENOM" id="CLU_014689_0_0_6"/>
<dbReference type="Proteomes" id="UP000002275">
    <property type="component" value="Chromosome 2"/>
</dbReference>
<dbReference type="GO" id="GO:0051539">
    <property type="term" value="F:4 iron, 4 sulfur cluster binding"/>
    <property type="evidence" value="ECO:0007669"/>
    <property type="project" value="UniProtKB-KW"/>
</dbReference>
<dbReference type="GO" id="GO:0005506">
    <property type="term" value="F:iron ion binding"/>
    <property type="evidence" value="ECO:0007669"/>
    <property type="project" value="UniProtKB-UniRule"/>
</dbReference>
<dbReference type="GO" id="GO:0070041">
    <property type="term" value="F:rRNA (uridine-C5-)-methyltransferase activity"/>
    <property type="evidence" value="ECO:0007669"/>
    <property type="project" value="UniProtKB-UniRule"/>
</dbReference>
<dbReference type="GO" id="GO:0070475">
    <property type="term" value="P:rRNA base methylation"/>
    <property type="evidence" value="ECO:0007669"/>
    <property type="project" value="TreeGrafter"/>
</dbReference>
<dbReference type="Gene3D" id="2.40.50.1070">
    <property type="match status" value="1"/>
</dbReference>
<dbReference type="Gene3D" id="3.40.50.150">
    <property type="entry name" value="Vaccinia Virus protein VP39"/>
    <property type="match status" value="1"/>
</dbReference>
<dbReference type="HAMAP" id="MF_01012">
    <property type="entry name" value="23SrRNA_methyltr_RlmC"/>
    <property type="match status" value="1"/>
</dbReference>
<dbReference type="InterPro" id="IPR011825">
    <property type="entry name" value="23SrRNA_MeTrfase_RlmC"/>
</dbReference>
<dbReference type="InterPro" id="IPR030390">
    <property type="entry name" value="MeTrfase_TrmA_AS"/>
</dbReference>
<dbReference type="InterPro" id="IPR029063">
    <property type="entry name" value="SAM-dependent_MTases_sf"/>
</dbReference>
<dbReference type="InterPro" id="IPR010280">
    <property type="entry name" value="U5_MeTrfase_fam"/>
</dbReference>
<dbReference type="NCBIfam" id="TIGR02085">
    <property type="entry name" value="meth_trns_rumB"/>
    <property type="match status" value="1"/>
</dbReference>
<dbReference type="PANTHER" id="PTHR11061">
    <property type="entry name" value="RNA M5U METHYLTRANSFERASE"/>
    <property type="match status" value="1"/>
</dbReference>
<dbReference type="PANTHER" id="PTHR11061:SF30">
    <property type="entry name" value="TRNA (URACIL(54)-C(5))-METHYLTRANSFERASE"/>
    <property type="match status" value="1"/>
</dbReference>
<dbReference type="Pfam" id="PF05958">
    <property type="entry name" value="tRNA_U5-meth_tr"/>
    <property type="match status" value="1"/>
</dbReference>
<dbReference type="SUPFAM" id="SSF53335">
    <property type="entry name" value="S-adenosyl-L-methionine-dependent methyltransferases"/>
    <property type="match status" value="1"/>
</dbReference>
<dbReference type="PROSITE" id="PS51687">
    <property type="entry name" value="SAM_MT_RNA_M5U"/>
    <property type="match status" value="1"/>
</dbReference>
<dbReference type="PROSITE" id="PS01230">
    <property type="entry name" value="TRMA_1"/>
    <property type="match status" value="1"/>
</dbReference>
<keyword id="KW-0004">4Fe-4S</keyword>
<keyword id="KW-0408">Iron</keyword>
<keyword id="KW-0411">Iron-sulfur</keyword>
<keyword id="KW-0479">Metal-binding</keyword>
<keyword id="KW-0489">Methyltransferase</keyword>
<keyword id="KW-0698">rRNA processing</keyword>
<keyword id="KW-0949">S-adenosyl-L-methionine</keyword>
<keyword id="KW-0808">Transferase</keyword>
<name>RLMC_VIBVU</name>